<sequence>MSLFGTTSGFGTSGTSMFGSATTDNHNPMKDIEVTSSPDDSIGCLSFSPPTLPGNFLIAGSWANDVRCWEVQDSGQTIPKAQQMHTGPVLDVCWSDDGSKVFTASCDKTAKMWDLSSNQAIQIAQHDAPVKTIHWIKAPNYSCVMTGSWDKTLKFWDTRSSNPMMVLQLPERYYCADVIYPMAVVATAGRGLIVYQLENQPSEFRRIESPLKHQHRCVAIFKDKQNKPTGFALGSIEGRVAIHYINPPNPAKDNFTFKCHRSNGTNTSAPQDIYAVNGIAFHPVHGTLATVGSDGRFSFWDKDARTKLKTSEQLDQPISACCFNHNGNIFAYASSYDWSKGHEFYNPQKKNYIFLRNAAEELKPRNKK</sequence>
<dbReference type="EMBL" id="AB169253">
    <property type="protein sequence ID" value="BAE01343.1"/>
    <property type="molecule type" value="mRNA"/>
</dbReference>
<dbReference type="RefSeq" id="NP_001271046.1">
    <property type="nucleotide sequence ID" value="NM_001284117.1"/>
</dbReference>
<dbReference type="SMR" id="Q4R6D2"/>
<dbReference type="STRING" id="9541.ENSMFAP00000023379"/>
<dbReference type="eggNOG" id="KOG0647">
    <property type="taxonomic scope" value="Eukaryota"/>
</dbReference>
<dbReference type="Proteomes" id="UP000233100">
    <property type="component" value="Unplaced"/>
</dbReference>
<dbReference type="GO" id="GO:0005737">
    <property type="term" value="C:cytoplasm"/>
    <property type="evidence" value="ECO:0007669"/>
    <property type="project" value="UniProtKB-SubCell"/>
</dbReference>
<dbReference type="GO" id="GO:0097431">
    <property type="term" value="C:mitotic spindle pole"/>
    <property type="evidence" value="ECO:0000250"/>
    <property type="project" value="UniProtKB"/>
</dbReference>
<dbReference type="GO" id="GO:0005634">
    <property type="term" value="C:nucleus"/>
    <property type="evidence" value="ECO:0007669"/>
    <property type="project" value="UniProtKB-SubCell"/>
</dbReference>
<dbReference type="GO" id="GO:0051301">
    <property type="term" value="P:cell division"/>
    <property type="evidence" value="ECO:0007669"/>
    <property type="project" value="UniProtKB-KW"/>
</dbReference>
<dbReference type="GO" id="GO:0060236">
    <property type="term" value="P:regulation of mitotic spindle organization"/>
    <property type="evidence" value="ECO:0000250"/>
    <property type="project" value="UniProtKB"/>
</dbReference>
<dbReference type="FunFam" id="2.130.10.10:FF:000084">
    <property type="entry name" value="mRNA export factor"/>
    <property type="match status" value="1"/>
</dbReference>
<dbReference type="Gene3D" id="2.130.10.10">
    <property type="entry name" value="YVTN repeat-like/Quinoprotein amine dehydrogenase"/>
    <property type="match status" value="1"/>
</dbReference>
<dbReference type="InterPro" id="IPR020472">
    <property type="entry name" value="G-protein_beta_WD-40_rep"/>
</dbReference>
<dbReference type="InterPro" id="IPR015943">
    <property type="entry name" value="WD40/YVTN_repeat-like_dom_sf"/>
</dbReference>
<dbReference type="InterPro" id="IPR019775">
    <property type="entry name" value="WD40_repeat_CS"/>
</dbReference>
<dbReference type="InterPro" id="IPR036322">
    <property type="entry name" value="WD40_repeat_dom_sf"/>
</dbReference>
<dbReference type="InterPro" id="IPR001680">
    <property type="entry name" value="WD40_rpt"/>
</dbReference>
<dbReference type="PANTHER" id="PTHR10971">
    <property type="entry name" value="MRNA EXPORT FACTOR AND BUB3"/>
    <property type="match status" value="1"/>
</dbReference>
<dbReference type="Pfam" id="PF00400">
    <property type="entry name" value="WD40"/>
    <property type="match status" value="3"/>
</dbReference>
<dbReference type="PRINTS" id="PR00320">
    <property type="entry name" value="GPROTEINBRPT"/>
</dbReference>
<dbReference type="SMART" id="SM00320">
    <property type="entry name" value="WD40"/>
    <property type="match status" value="4"/>
</dbReference>
<dbReference type="SUPFAM" id="SSF50978">
    <property type="entry name" value="WD40 repeat-like"/>
    <property type="match status" value="1"/>
</dbReference>
<dbReference type="PROSITE" id="PS00678">
    <property type="entry name" value="WD_REPEATS_1"/>
    <property type="match status" value="2"/>
</dbReference>
<dbReference type="PROSITE" id="PS50082">
    <property type="entry name" value="WD_REPEATS_2"/>
    <property type="match status" value="3"/>
</dbReference>
<dbReference type="PROSITE" id="PS50294">
    <property type="entry name" value="WD_REPEATS_REGION"/>
    <property type="match status" value="1"/>
</dbReference>
<name>RAE1L_MACFA</name>
<feature type="chain" id="PRO_0000266024" description="mRNA export factor">
    <location>
        <begin position="1"/>
        <end position="368"/>
    </location>
</feature>
<feature type="repeat" description="WD 1">
    <location>
        <begin position="37"/>
        <end position="79"/>
    </location>
</feature>
<feature type="repeat" description="WD 2">
    <location>
        <begin position="84"/>
        <end position="114"/>
    </location>
</feature>
<feature type="repeat" description="WD 3">
    <location>
        <begin position="125"/>
        <end position="157"/>
    </location>
</feature>
<feature type="repeat" description="WD 4">
    <location>
        <begin position="168"/>
        <end position="206"/>
    </location>
</feature>
<feature type="repeat" description="WD 5">
    <location>
        <begin position="215"/>
        <end position="255"/>
    </location>
</feature>
<feature type="repeat" description="WD 6">
    <location>
        <begin position="271"/>
        <end position="301"/>
    </location>
</feature>
<feature type="repeat" description="WD 7">
    <location>
        <begin position="310"/>
        <end position="346"/>
    </location>
</feature>
<feature type="region of interest" description="Disordered" evidence="2">
    <location>
        <begin position="15"/>
        <end position="34"/>
    </location>
</feature>
<feature type="modified residue" description="Phosphothreonine" evidence="1">
    <location>
        <position position="229"/>
    </location>
</feature>
<gene>
    <name type="primary">RAE1</name>
    <name type="synonym">MRNP41</name>
    <name type="ORF">QtsA-18247</name>
</gene>
<protein>
    <recommendedName>
        <fullName>mRNA export factor</fullName>
    </recommendedName>
    <alternativeName>
        <fullName>Rae1 protein homolog</fullName>
    </alternativeName>
    <alternativeName>
        <fullName>mRNA-associated protein mrnp 41</fullName>
    </alternativeName>
</protein>
<evidence type="ECO:0000250" key="1">
    <source>
        <dbReference type="UniProtKB" id="P78406"/>
    </source>
</evidence>
<evidence type="ECO:0000256" key="2">
    <source>
        <dbReference type="SAM" id="MobiDB-lite"/>
    </source>
</evidence>
<evidence type="ECO:0000305" key="3"/>
<accession>Q4R6D2</accession>
<keyword id="KW-0131">Cell cycle</keyword>
<keyword id="KW-0132">Cell division</keyword>
<keyword id="KW-0963">Cytoplasm</keyword>
<keyword id="KW-0206">Cytoskeleton</keyword>
<keyword id="KW-0498">Mitosis</keyword>
<keyword id="KW-0539">Nucleus</keyword>
<keyword id="KW-0597">Phosphoprotein</keyword>
<keyword id="KW-1185">Reference proteome</keyword>
<keyword id="KW-0677">Repeat</keyword>
<keyword id="KW-0813">Transport</keyword>
<keyword id="KW-0853">WD repeat</keyword>
<comment type="function">
    <text evidence="1">Plays a role in mitotic bipolar spindle formation. Binds mRNA. May function in nucleocytoplasmic transport and in directly or indirectly attaching cytoplasmic mRNPs to the cytoskeleton.</text>
</comment>
<comment type="subunit">
    <text evidence="1">Interacts with NUMA1 (via N-terminal end of the coiled-coil domain); this interaction promotes spindle formation in mitosis (By similarity). Interacts with NUP98 (By similarity). Interacts with MYCBP2 (By similarity). Interacts with USP11 (By similarity).</text>
</comment>
<comment type="subcellular location">
    <subcellularLocation>
        <location evidence="1">Cytoplasm</location>
    </subcellularLocation>
    <subcellularLocation>
        <location evidence="1">Nucleus</location>
    </subcellularLocation>
    <subcellularLocation>
        <location evidence="1">Cytoplasm</location>
        <location evidence="1">Cytoskeleton</location>
        <location evidence="1">Spindle pole</location>
    </subcellularLocation>
    <text evidence="1">Recruited from interphase nuclei to spindle MTs during mitosis.</text>
</comment>
<comment type="similarity">
    <text evidence="3">Belongs to the WD repeat rae1 family.</text>
</comment>
<proteinExistence type="evidence at transcript level"/>
<reference key="1">
    <citation type="submission" date="2005-06" db="EMBL/GenBank/DDBJ databases">
        <title>DNA sequences of macaque genes expressed in brain or testis and its evolutionary implications.</title>
        <authorList>
            <consortium name="International consortium for macaque cDNA sequencing and analysis"/>
        </authorList>
    </citation>
    <scope>NUCLEOTIDE SEQUENCE [LARGE SCALE MRNA]</scope>
    <source>
        <tissue>Testis</tissue>
    </source>
</reference>
<organism>
    <name type="scientific">Macaca fascicularis</name>
    <name type="common">Crab-eating macaque</name>
    <name type="synonym">Cynomolgus monkey</name>
    <dbReference type="NCBI Taxonomy" id="9541"/>
    <lineage>
        <taxon>Eukaryota</taxon>
        <taxon>Metazoa</taxon>
        <taxon>Chordata</taxon>
        <taxon>Craniata</taxon>
        <taxon>Vertebrata</taxon>
        <taxon>Euteleostomi</taxon>
        <taxon>Mammalia</taxon>
        <taxon>Eutheria</taxon>
        <taxon>Euarchontoglires</taxon>
        <taxon>Primates</taxon>
        <taxon>Haplorrhini</taxon>
        <taxon>Catarrhini</taxon>
        <taxon>Cercopithecidae</taxon>
        <taxon>Cercopithecinae</taxon>
        <taxon>Macaca</taxon>
    </lineage>
</organism>